<gene>
    <name type="primary">ybfD</name>
    <name type="ordered locus">b0706</name>
    <name type="ordered locus">JW0696</name>
</gene>
<keyword id="KW-1185">Reference proteome</keyword>
<reference key="1">
    <citation type="journal article" date="1993" name="J. Bacteriol.">
        <title>Rhs elements of Escherichia coli K-12: complex composites of shared and unique components that have different evolutionary histories.</title>
        <authorList>
            <person name="Zhao S."/>
            <person name="Sandt C.H."/>
            <person name="Feulner G."/>
            <person name="Vlazny D.A."/>
            <person name="Gray J.A."/>
            <person name="Hill C.W."/>
        </authorList>
    </citation>
    <scope>NUCLEOTIDE SEQUENCE [GENOMIC DNA]</scope>
    <source>
        <strain>K12</strain>
    </source>
</reference>
<reference key="2">
    <citation type="journal article" date="1996" name="DNA Res.">
        <title>A 718-kb DNA sequence of the Escherichia coli K-12 genome corresponding to the 12.7-28.0 min region on the linkage map.</title>
        <authorList>
            <person name="Oshima T."/>
            <person name="Aiba H."/>
            <person name="Baba T."/>
            <person name="Fujita K."/>
            <person name="Hayashi K."/>
            <person name="Honjo A."/>
            <person name="Ikemoto K."/>
            <person name="Inada T."/>
            <person name="Itoh T."/>
            <person name="Kajihara M."/>
            <person name="Kanai K."/>
            <person name="Kashimoto K."/>
            <person name="Kimura S."/>
            <person name="Kitagawa M."/>
            <person name="Makino K."/>
            <person name="Masuda S."/>
            <person name="Miki T."/>
            <person name="Mizobuchi K."/>
            <person name="Mori H."/>
            <person name="Motomura K."/>
            <person name="Nakamura Y."/>
            <person name="Nashimoto H."/>
            <person name="Nishio Y."/>
            <person name="Saito N."/>
            <person name="Sampei G."/>
            <person name="Seki Y."/>
            <person name="Tagami H."/>
            <person name="Takemoto K."/>
            <person name="Wada C."/>
            <person name="Yamamoto Y."/>
            <person name="Yano M."/>
            <person name="Horiuchi T."/>
        </authorList>
    </citation>
    <scope>NUCLEOTIDE SEQUENCE [LARGE SCALE GENOMIC DNA]</scope>
    <source>
        <strain>K12 / W3110 / ATCC 27325 / DSM 5911</strain>
    </source>
</reference>
<reference key="3">
    <citation type="journal article" date="1997" name="Science">
        <title>The complete genome sequence of Escherichia coli K-12.</title>
        <authorList>
            <person name="Blattner F.R."/>
            <person name="Plunkett G. III"/>
            <person name="Bloch C.A."/>
            <person name="Perna N.T."/>
            <person name="Burland V."/>
            <person name="Riley M."/>
            <person name="Collado-Vides J."/>
            <person name="Glasner J.D."/>
            <person name="Rode C.K."/>
            <person name="Mayhew G.F."/>
            <person name="Gregor J."/>
            <person name="Davis N.W."/>
            <person name="Kirkpatrick H.A."/>
            <person name="Goeden M.A."/>
            <person name="Rose D.J."/>
            <person name="Mau B."/>
            <person name="Shao Y."/>
        </authorList>
    </citation>
    <scope>NUCLEOTIDE SEQUENCE [LARGE SCALE GENOMIC DNA]</scope>
    <source>
        <strain>K12 / MG1655 / ATCC 47076</strain>
    </source>
</reference>
<reference key="4">
    <citation type="journal article" date="2006" name="Mol. Syst. Biol.">
        <title>Highly accurate genome sequences of Escherichia coli K-12 strains MG1655 and W3110.</title>
        <authorList>
            <person name="Hayashi K."/>
            <person name="Morooka N."/>
            <person name="Yamamoto Y."/>
            <person name="Fujita K."/>
            <person name="Isono K."/>
            <person name="Choi S."/>
            <person name="Ohtsubo E."/>
            <person name="Baba T."/>
            <person name="Wanner B.L."/>
            <person name="Mori H."/>
            <person name="Horiuchi T."/>
        </authorList>
    </citation>
    <scope>NUCLEOTIDE SEQUENCE [LARGE SCALE GENOMIC DNA]</scope>
    <source>
        <strain>K12 / W3110 / ATCC 27325 / DSM 5911</strain>
    </source>
</reference>
<reference key="5">
    <citation type="journal article" date="1995" name="J. Bacteriol.">
        <title>Reshuffling of Rhs components to create a new element.</title>
        <authorList>
            <person name="Zhao S."/>
            <person name="Hill C.W."/>
        </authorList>
    </citation>
    <scope>NUCLEOTIDE SEQUENCE [GENOMIC DNA] OF 1-23</scope>
    <source>
        <strain>O2:HN / ECOR-50 / P97 / UPEC</strain>
    </source>
</reference>
<feature type="chain" id="PRO_0000168687" description="H repeat-associated putative transposase YbfD">
    <location>
        <begin position="1"/>
        <end position="253"/>
    </location>
</feature>
<organism>
    <name type="scientific">Escherichia coli (strain K12)</name>
    <dbReference type="NCBI Taxonomy" id="83333"/>
    <lineage>
        <taxon>Bacteria</taxon>
        <taxon>Pseudomonadati</taxon>
        <taxon>Pseudomonadota</taxon>
        <taxon>Gammaproteobacteria</taxon>
        <taxon>Enterobacterales</taxon>
        <taxon>Enterobacteriaceae</taxon>
        <taxon>Escherichia</taxon>
    </lineage>
</organism>
<evidence type="ECO:0000305" key="1"/>
<comment type="similarity">
    <text evidence="1">Belongs to the transposase 11 family.</text>
</comment>
<dbReference type="EMBL" id="L02373">
    <property type="protein sequence ID" value="AAC63076.1"/>
    <property type="molecule type" value="Genomic_DNA"/>
</dbReference>
<dbReference type="EMBL" id="U00096">
    <property type="protein sequence ID" value="AAC73800.1"/>
    <property type="molecule type" value="Genomic_DNA"/>
</dbReference>
<dbReference type="EMBL" id="AP009048">
    <property type="protein sequence ID" value="BAA35365.1"/>
    <property type="molecule type" value="Genomic_DNA"/>
</dbReference>
<dbReference type="EMBL" id="AH003093">
    <property type="protein sequence ID" value="AAA66213.1"/>
    <property type="molecule type" value="Genomic_DNA"/>
</dbReference>
<dbReference type="PIR" id="A64806">
    <property type="entry name" value="A64806"/>
</dbReference>
<dbReference type="RefSeq" id="NP_415234.1">
    <property type="nucleotide sequence ID" value="NC_000913.3"/>
</dbReference>
<dbReference type="BioGRID" id="4261600">
    <property type="interactions" value="160"/>
</dbReference>
<dbReference type="FunCoup" id="P28916">
    <property type="interactions" value="92"/>
</dbReference>
<dbReference type="IntAct" id="P28916">
    <property type="interactions" value="5"/>
</dbReference>
<dbReference type="STRING" id="511145.b0706"/>
<dbReference type="PaxDb" id="511145-b0706"/>
<dbReference type="EnsemblBacteria" id="AAC73800">
    <property type="protein sequence ID" value="AAC73800"/>
    <property type="gene ID" value="b0706"/>
</dbReference>
<dbReference type="GeneID" id="945176"/>
<dbReference type="KEGG" id="ecj:JW0696"/>
<dbReference type="KEGG" id="eco:b0706"/>
<dbReference type="KEGG" id="ecoc:C3026_03530"/>
<dbReference type="PATRIC" id="fig|511145.12.peg.736"/>
<dbReference type="EchoBASE" id="EB1486"/>
<dbReference type="eggNOG" id="COG5433">
    <property type="taxonomic scope" value="Bacteria"/>
</dbReference>
<dbReference type="HOGENOM" id="CLU_046404_0_0_6"/>
<dbReference type="InParanoid" id="P28916"/>
<dbReference type="OMA" id="GNSKYEW"/>
<dbReference type="PhylomeDB" id="P28916"/>
<dbReference type="BioCyc" id="EcoCyc:EG11524-MONOMER"/>
<dbReference type="PRO" id="PR:P28916"/>
<dbReference type="Proteomes" id="UP000000625">
    <property type="component" value="Chromosome"/>
</dbReference>
<dbReference type="GO" id="GO:0003677">
    <property type="term" value="F:DNA binding"/>
    <property type="evidence" value="ECO:0007669"/>
    <property type="project" value="InterPro"/>
</dbReference>
<dbReference type="GO" id="GO:0004803">
    <property type="term" value="F:transposase activity"/>
    <property type="evidence" value="ECO:0007669"/>
    <property type="project" value="InterPro"/>
</dbReference>
<dbReference type="GO" id="GO:0006313">
    <property type="term" value="P:DNA transposition"/>
    <property type="evidence" value="ECO:0007669"/>
    <property type="project" value="InterPro"/>
</dbReference>
<dbReference type="InterPro" id="IPR047647">
    <property type="entry name" value="ISAs1_transpos"/>
</dbReference>
<dbReference type="InterPro" id="IPR002559">
    <property type="entry name" value="Transposase_11"/>
</dbReference>
<dbReference type="InterPro" id="IPR051698">
    <property type="entry name" value="Transposase_11-like"/>
</dbReference>
<dbReference type="InterPro" id="IPR032806">
    <property type="entry name" value="YbfD_N"/>
</dbReference>
<dbReference type="NCBIfam" id="NF033564">
    <property type="entry name" value="transpos_ISAs1"/>
    <property type="match status" value="1"/>
</dbReference>
<dbReference type="PANTHER" id="PTHR30298">
    <property type="entry name" value="H REPEAT-ASSOCIATED PREDICTED TRANSPOSASE"/>
    <property type="match status" value="1"/>
</dbReference>
<dbReference type="PANTHER" id="PTHR30298:SF0">
    <property type="entry name" value="PROTEIN YBFL-RELATED"/>
    <property type="match status" value="1"/>
</dbReference>
<dbReference type="Pfam" id="PF01609">
    <property type="entry name" value="DDE_Tnp_1"/>
    <property type="match status" value="1"/>
</dbReference>
<dbReference type="Pfam" id="PF13808">
    <property type="entry name" value="DDE_Tnp_1_assoc"/>
    <property type="match status" value="1"/>
</dbReference>
<accession>P28916</accession>
<protein>
    <recommendedName>
        <fullName>H repeat-associated putative transposase YbfD</fullName>
    </recommendedName>
    <alternativeName>
        <fullName>ORF-H3</fullName>
    </alternativeName>
</protein>
<sequence length="253" mass="28865">MELKKLMEHISIIPDYRQAWKVEHKLSDILLLTICAVISGAEGWEDIEDFGETHPDFLKQYGDFENGIPVHDTIARVVSCICPAKFHESFINWMLDYHSSDDKDVIAIDGKIHRHSYDKSRRKGAIHVISAFSTMHSLVIGQIKTDKKSNEITAIPELLNMLDIKGKIIKTDAMGCQKDIAEKIQKQGGDYLFAVKGNQGRLNKAFEEKFPLKELNNPKHDSYAISEKSHGREETRLHIVCDVPDELIDFTFE</sequence>
<name>YBFD_ECOLI</name>
<proteinExistence type="inferred from homology"/>